<reference key="1">
    <citation type="journal article" date="2000" name="Nature">
        <title>Complete DNA sequence of a serogroup A strain of Neisseria meningitidis Z2491.</title>
        <authorList>
            <person name="Parkhill J."/>
            <person name="Achtman M."/>
            <person name="James K.D."/>
            <person name="Bentley S.D."/>
            <person name="Churcher C.M."/>
            <person name="Klee S.R."/>
            <person name="Morelli G."/>
            <person name="Basham D."/>
            <person name="Brown D."/>
            <person name="Chillingworth T."/>
            <person name="Davies R.M."/>
            <person name="Davis P."/>
            <person name="Devlin K."/>
            <person name="Feltwell T."/>
            <person name="Hamlin N."/>
            <person name="Holroyd S."/>
            <person name="Jagels K."/>
            <person name="Leather S."/>
            <person name="Moule S."/>
            <person name="Mungall K.L."/>
            <person name="Quail M.A."/>
            <person name="Rajandream M.A."/>
            <person name="Rutherford K.M."/>
            <person name="Simmonds M."/>
            <person name="Skelton J."/>
            <person name="Whitehead S."/>
            <person name="Spratt B.G."/>
            <person name="Barrell B.G."/>
        </authorList>
    </citation>
    <scope>NUCLEOTIDE SEQUENCE [LARGE SCALE GENOMIC DNA]</scope>
    <source>
        <strain>DSM 15465 / Z2491</strain>
    </source>
</reference>
<dbReference type="EC" id="2.7.2.1" evidence="1"/>
<dbReference type="EMBL" id="AL157959">
    <property type="protein sequence ID" value="CAM08847.1"/>
    <property type="status" value="ALT_INIT"/>
    <property type="molecule type" value="Genomic_DNA"/>
</dbReference>
<dbReference type="PIR" id="A81868">
    <property type="entry name" value="A81868"/>
</dbReference>
<dbReference type="RefSeq" id="WP_002226213.1">
    <property type="nucleotide sequence ID" value="NC_003116.1"/>
</dbReference>
<dbReference type="SMR" id="Q9JTM0"/>
<dbReference type="EnsemblBacteria" id="CAM08847">
    <property type="protein sequence ID" value="CAM08847"/>
    <property type="gene ID" value="NMA1718"/>
</dbReference>
<dbReference type="KEGG" id="nma:NMA1718"/>
<dbReference type="HOGENOM" id="CLU_020352_0_1_4"/>
<dbReference type="UniPathway" id="UPA00340">
    <property type="reaction ID" value="UER00458"/>
</dbReference>
<dbReference type="Proteomes" id="UP000000626">
    <property type="component" value="Chromosome"/>
</dbReference>
<dbReference type="GO" id="GO:0005829">
    <property type="term" value="C:cytosol"/>
    <property type="evidence" value="ECO:0007669"/>
    <property type="project" value="TreeGrafter"/>
</dbReference>
<dbReference type="GO" id="GO:0008776">
    <property type="term" value="F:acetate kinase activity"/>
    <property type="evidence" value="ECO:0007669"/>
    <property type="project" value="UniProtKB-UniRule"/>
</dbReference>
<dbReference type="GO" id="GO:0005524">
    <property type="term" value="F:ATP binding"/>
    <property type="evidence" value="ECO:0007669"/>
    <property type="project" value="UniProtKB-KW"/>
</dbReference>
<dbReference type="GO" id="GO:0000287">
    <property type="term" value="F:magnesium ion binding"/>
    <property type="evidence" value="ECO:0007669"/>
    <property type="project" value="UniProtKB-UniRule"/>
</dbReference>
<dbReference type="GO" id="GO:0006083">
    <property type="term" value="P:acetate metabolic process"/>
    <property type="evidence" value="ECO:0007669"/>
    <property type="project" value="TreeGrafter"/>
</dbReference>
<dbReference type="GO" id="GO:0006085">
    <property type="term" value="P:acetyl-CoA biosynthetic process"/>
    <property type="evidence" value="ECO:0007669"/>
    <property type="project" value="UniProtKB-UniRule"/>
</dbReference>
<dbReference type="CDD" id="cd24010">
    <property type="entry name" value="ASKHA_NBD_AcK_PK"/>
    <property type="match status" value="1"/>
</dbReference>
<dbReference type="Gene3D" id="3.30.420.40">
    <property type="match status" value="2"/>
</dbReference>
<dbReference type="HAMAP" id="MF_00020">
    <property type="entry name" value="Acetate_kinase"/>
    <property type="match status" value="1"/>
</dbReference>
<dbReference type="InterPro" id="IPR004372">
    <property type="entry name" value="Ac/propionate_kinase"/>
</dbReference>
<dbReference type="InterPro" id="IPR000890">
    <property type="entry name" value="Aliphatic_acid_kin_short-chain"/>
</dbReference>
<dbReference type="InterPro" id="IPR023865">
    <property type="entry name" value="Aliphatic_acid_kinase_CS"/>
</dbReference>
<dbReference type="InterPro" id="IPR043129">
    <property type="entry name" value="ATPase_NBD"/>
</dbReference>
<dbReference type="NCBIfam" id="TIGR00016">
    <property type="entry name" value="ackA"/>
    <property type="match status" value="1"/>
</dbReference>
<dbReference type="PANTHER" id="PTHR21060">
    <property type="entry name" value="ACETATE KINASE"/>
    <property type="match status" value="1"/>
</dbReference>
<dbReference type="PANTHER" id="PTHR21060:SF21">
    <property type="entry name" value="ACETATE KINASE"/>
    <property type="match status" value="1"/>
</dbReference>
<dbReference type="Pfam" id="PF00871">
    <property type="entry name" value="Acetate_kinase"/>
    <property type="match status" value="1"/>
</dbReference>
<dbReference type="PIRSF" id="PIRSF000722">
    <property type="entry name" value="Acetate_prop_kin"/>
    <property type="match status" value="1"/>
</dbReference>
<dbReference type="PRINTS" id="PR00471">
    <property type="entry name" value="ACETATEKNASE"/>
</dbReference>
<dbReference type="SUPFAM" id="SSF53067">
    <property type="entry name" value="Actin-like ATPase domain"/>
    <property type="match status" value="2"/>
</dbReference>
<dbReference type="PROSITE" id="PS01075">
    <property type="entry name" value="ACETATE_KINASE_1"/>
    <property type="match status" value="1"/>
</dbReference>
<dbReference type="PROSITE" id="PS01076">
    <property type="entry name" value="ACETATE_KINASE_2"/>
    <property type="match status" value="1"/>
</dbReference>
<protein>
    <recommendedName>
        <fullName evidence="1">Acetate kinase 1</fullName>
        <ecNumber evidence="1">2.7.2.1</ecNumber>
    </recommendedName>
    <alternativeName>
        <fullName evidence="1">Acetokinase 1</fullName>
    </alternativeName>
</protein>
<keyword id="KW-0067">ATP-binding</keyword>
<keyword id="KW-0963">Cytoplasm</keyword>
<keyword id="KW-0418">Kinase</keyword>
<keyword id="KW-0460">Magnesium</keyword>
<keyword id="KW-0479">Metal-binding</keyword>
<keyword id="KW-0547">Nucleotide-binding</keyword>
<keyword id="KW-0808">Transferase</keyword>
<gene>
    <name evidence="1" type="primary">ackA1</name>
    <name type="ordered locus">NMA1718</name>
</gene>
<accession>Q9JTM0</accession>
<accession>A1IST5</accession>
<name>ACKA1_NEIMA</name>
<sequence length="398" mass="42468">MSQKLILVLNCGSSSLKGAVLDNGSGEVLLSCLAEKLNLPDAYITFKVNGEKHKVDLSAHPDHTGAVEALMEELKAHGLDSRIGAIGHRVVSGGELYSESILVDDEVIAGIEKCIPLAPLHNPAHLLGLRAAQSIFKDLPNVVVFDTSFHQTMPEVAYKYAVPQELYEKYGLRRYGAHGTSYRFVADETARFLGKDKKDLRMVIAHLGNGASITAVANGESRDTSMGLTPLEGLVMGTRSGDIDPSVFGFLAENANMTIAQITEMLNKKSGLLGISGLSNDCRTIEEEAAKGHKGAKLALDMFIYRLAKYIGSMAVAAGGLDALVFTGGIGENSDIIRERVIGYLGFLGLNIDQEANLKARFGNAGVITTADSKAVAVVIPTNEELMIAHDTARLSGL</sequence>
<organism>
    <name type="scientific">Neisseria meningitidis serogroup A / serotype 4A (strain DSM 15465 / Z2491)</name>
    <dbReference type="NCBI Taxonomy" id="122587"/>
    <lineage>
        <taxon>Bacteria</taxon>
        <taxon>Pseudomonadati</taxon>
        <taxon>Pseudomonadota</taxon>
        <taxon>Betaproteobacteria</taxon>
        <taxon>Neisseriales</taxon>
        <taxon>Neisseriaceae</taxon>
        <taxon>Neisseria</taxon>
    </lineage>
</organism>
<feature type="chain" id="PRO_0000107590" description="Acetate kinase 1">
    <location>
        <begin position="1"/>
        <end position="398"/>
    </location>
</feature>
<feature type="active site" description="Proton donor/acceptor" evidence="1">
    <location>
        <position position="146"/>
    </location>
</feature>
<feature type="binding site" evidence="1">
    <location>
        <position position="10"/>
    </location>
    <ligand>
        <name>Mg(2+)</name>
        <dbReference type="ChEBI" id="CHEBI:18420"/>
    </ligand>
</feature>
<feature type="binding site" evidence="1">
    <location>
        <position position="17"/>
    </location>
    <ligand>
        <name>ATP</name>
        <dbReference type="ChEBI" id="CHEBI:30616"/>
    </ligand>
</feature>
<feature type="binding site" evidence="1">
    <location>
        <position position="89"/>
    </location>
    <ligand>
        <name>substrate</name>
    </ligand>
</feature>
<feature type="binding site" evidence="1">
    <location>
        <begin position="206"/>
        <end position="210"/>
    </location>
    <ligand>
        <name>ATP</name>
        <dbReference type="ChEBI" id="CHEBI:30616"/>
    </ligand>
</feature>
<feature type="binding site" evidence="1">
    <location>
        <begin position="281"/>
        <end position="283"/>
    </location>
    <ligand>
        <name>ATP</name>
        <dbReference type="ChEBI" id="CHEBI:30616"/>
    </ligand>
</feature>
<feature type="binding site" evidence="1">
    <location>
        <begin position="329"/>
        <end position="333"/>
    </location>
    <ligand>
        <name>ATP</name>
        <dbReference type="ChEBI" id="CHEBI:30616"/>
    </ligand>
</feature>
<feature type="binding site" evidence="1">
    <location>
        <position position="384"/>
    </location>
    <ligand>
        <name>Mg(2+)</name>
        <dbReference type="ChEBI" id="CHEBI:18420"/>
    </ligand>
</feature>
<feature type="site" description="Transition state stabilizer" evidence="1">
    <location>
        <position position="178"/>
    </location>
</feature>
<feature type="site" description="Transition state stabilizer" evidence="1">
    <location>
        <position position="239"/>
    </location>
</feature>
<comment type="function">
    <text evidence="1">Catalyzes the formation of acetyl phosphate from acetate and ATP. Can also catalyze the reverse reaction.</text>
</comment>
<comment type="catalytic activity">
    <reaction evidence="1">
        <text>acetate + ATP = acetyl phosphate + ADP</text>
        <dbReference type="Rhea" id="RHEA:11352"/>
        <dbReference type="ChEBI" id="CHEBI:22191"/>
        <dbReference type="ChEBI" id="CHEBI:30089"/>
        <dbReference type="ChEBI" id="CHEBI:30616"/>
        <dbReference type="ChEBI" id="CHEBI:456216"/>
        <dbReference type="EC" id="2.7.2.1"/>
    </reaction>
</comment>
<comment type="cofactor">
    <cofactor evidence="1">
        <name>Mg(2+)</name>
        <dbReference type="ChEBI" id="CHEBI:18420"/>
    </cofactor>
    <cofactor evidence="1">
        <name>Mn(2+)</name>
        <dbReference type="ChEBI" id="CHEBI:29035"/>
    </cofactor>
    <text evidence="1">Mg(2+). Can also accept Mn(2+).</text>
</comment>
<comment type="pathway">
    <text evidence="1">Metabolic intermediate biosynthesis; acetyl-CoA biosynthesis; acetyl-CoA from acetate: step 1/2.</text>
</comment>
<comment type="subunit">
    <text evidence="1">Homodimer.</text>
</comment>
<comment type="subcellular location">
    <subcellularLocation>
        <location evidence="1">Cytoplasm</location>
    </subcellularLocation>
</comment>
<comment type="similarity">
    <text evidence="1">Belongs to the acetokinase family.</text>
</comment>
<comment type="sequence caution" evidence="2">
    <conflict type="erroneous initiation">
        <sequence resource="EMBL-CDS" id="CAM08847"/>
    </conflict>
</comment>
<evidence type="ECO:0000255" key="1">
    <source>
        <dbReference type="HAMAP-Rule" id="MF_00020"/>
    </source>
</evidence>
<evidence type="ECO:0000305" key="2"/>
<proteinExistence type="inferred from homology"/>